<feature type="chain" id="PRO_0000186555" description="PTS system glucose-specific EIIA component">
    <location>
        <begin position="1"/>
        <end position="166"/>
    </location>
</feature>
<feature type="domain" description="PTS EIIA type-1" evidence="2">
    <location>
        <begin position="34"/>
        <end position="138"/>
    </location>
</feature>
<feature type="active site" description="Tele-phosphohistidine intermediate; for EIIA activity" evidence="1 2">
    <location>
        <position position="86"/>
    </location>
</feature>
<feature type="binding site" evidence="1">
    <location>
        <position position="71"/>
    </location>
    <ligand>
        <name>Zn(2+)</name>
        <dbReference type="ChEBI" id="CHEBI:29105"/>
        <note>ligand shared with glycerol kinase</note>
    </ligand>
</feature>
<feature type="binding site" evidence="1">
    <location>
        <position position="86"/>
    </location>
    <ligand>
        <name>Zn(2+)</name>
        <dbReference type="ChEBI" id="CHEBI:29105"/>
        <note>ligand shared with glycerol kinase</note>
    </ligand>
</feature>
<feature type="site" description="Important for phospho-donor activity" evidence="1">
    <location>
        <position position="71"/>
    </location>
</feature>
<feature type="modified residue" description="Phosphohistidine; by HPr" evidence="1">
    <location>
        <position position="86"/>
    </location>
</feature>
<keyword id="KW-0963">Cytoplasm</keyword>
<keyword id="KW-0418">Kinase</keyword>
<keyword id="KW-0479">Metal-binding</keyword>
<keyword id="KW-0597">Phosphoprotein</keyword>
<keyword id="KW-0598">Phosphotransferase system</keyword>
<keyword id="KW-1185">Reference proteome</keyword>
<keyword id="KW-0762">Sugar transport</keyword>
<keyword id="KW-0808">Transferase</keyword>
<keyword id="KW-0813">Transport</keyword>
<keyword id="KW-0862">Zinc</keyword>
<proteinExistence type="inferred from homology"/>
<accession>Q5HPB5</accession>
<evidence type="ECO:0000250" key="1">
    <source>
        <dbReference type="UniProtKB" id="P69783"/>
    </source>
</evidence>
<evidence type="ECO:0000255" key="2">
    <source>
        <dbReference type="PROSITE-ProRule" id="PRU00416"/>
    </source>
</evidence>
<evidence type="ECO:0000305" key="3"/>
<dbReference type="EMBL" id="CP000029">
    <property type="protein sequence ID" value="AAW54360.1"/>
    <property type="molecule type" value="Genomic_DNA"/>
</dbReference>
<dbReference type="RefSeq" id="WP_001831133.1">
    <property type="nucleotide sequence ID" value="NC_002976.3"/>
</dbReference>
<dbReference type="SMR" id="Q5HPB5"/>
<dbReference type="STRING" id="176279.SERP0998"/>
<dbReference type="KEGG" id="ser:SERP0998"/>
<dbReference type="eggNOG" id="COG2190">
    <property type="taxonomic scope" value="Bacteria"/>
</dbReference>
<dbReference type="HOGENOM" id="CLU_012312_5_3_9"/>
<dbReference type="Proteomes" id="UP000000531">
    <property type="component" value="Chromosome"/>
</dbReference>
<dbReference type="GO" id="GO:0005737">
    <property type="term" value="C:cytoplasm"/>
    <property type="evidence" value="ECO:0007669"/>
    <property type="project" value="UniProtKB-SubCell"/>
</dbReference>
<dbReference type="GO" id="GO:0016301">
    <property type="term" value="F:kinase activity"/>
    <property type="evidence" value="ECO:0007669"/>
    <property type="project" value="UniProtKB-KW"/>
</dbReference>
<dbReference type="GO" id="GO:0046872">
    <property type="term" value="F:metal ion binding"/>
    <property type="evidence" value="ECO:0007669"/>
    <property type="project" value="UniProtKB-KW"/>
</dbReference>
<dbReference type="GO" id="GO:0009401">
    <property type="term" value="P:phosphoenolpyruvate-dependent sugar phosphotransferase system"/>
    <property type="evidence" value="ECO:0007669"/>
    <property type="project" value="UniProtKB-KW"/>
</dbReference>
<dbReference type="FunFam" id="2.70.70.10:FF:000001">
    <property type="entry name" value="PTS system glucose-specific IIA component"/>
    <property type="match status" value="1"/>
</dbReference>
<dbReference type="Gene3D" id="2.70.70.10">
    <property type="entry name" value="Glucose Permease (Domain IIA)"/>
    <property type="match status" value="1"/>
</dbReference>
<dbReference type="InterPro" id="IPR011055">
    <property type="entry name" value="Dup_hybrid_motif"/>
</dbReference>
<dbReference type="InterPro" id="IPR001127">
    <property type="entry name" value="PTS_EIIA_1_perm"/>
</dbReference>
<dbReference type="InterPro" id="IPR050890">
    <property type="entry name" value="PTS_EIIA_component"/>
</dbReference>
<dbReference type="NCBIfam" id="TIGR00830">
    <property type="entry name" value="PTBA"/>
    <property type="match status" value="1"/>
</dbReference>
<dbReference type="PANTHER" id="PTHR45008">
    <property type="entry name" value="PTS SYSTEM GLUCOSE-SPECIFIC EIIA COMPONENT"/>
    <property type="match status" value="1"/>
</dbReference>
<dbReference type="PANTHER" id="PTHR45008:SF1">
    <property type="entry name" value="PTS SYSTEM GLUCOSE-SPECIFIC EIIA COMPONENT"/>
    <property type="match status" value="1"/>
</dbReference>
<dbReference type="Pfam" id="PF00358">
    <property type="entry name" value="PTS_EIIA_1"/>
    <property type="match status" value="1"/>
</dbReference>
<dbReference type="SUPFAM" id="SSF51261">
    <property type="entry name" value="Duplicated hybrid motif"/>
    <property type="match status" value="1"/>
</dbReference>
<dbReference type="PROSITE" id="PS51093">
    <property type="entry name" value="PTS_EIIA_TYPE_1"/>
    <property type="match status" value="1"/>
</dbReference>
<dbReference type="PROSITE" id="PS00371">
    <property type="entry name" value="PTS_EIIA_TYPE_1_HIS"/>
    <property type="match status" value="1"/>
</dbReference>
<reference key="1">
    <citation type="journal article" date="2005" name="J. Bacteriol.">
        <title>Insights on evolution of virulence and resistance from the complete genome analysis of an early methicillin-resistant Staphylococcus aureus strain and a biofilm-producing methicillin-resistant Staphylococcus epidermidis strain.</title>
        <authorList>
            <person name="Gill S.R."/>
            <person name="Fouts D.E."/>
            <person name="Archer G.L."/>
            <person name="Mongodin E.F."/>
            <person name="DeBoy R.T."/>
            <person name="Ravel J."/>
            <person name="Paulsen I.T."/>
            <person name="Kolonay J.F."/>
            <person name="Brinkac L.M."/>
            <person name="Beanan M.J."/>
            <person name="Dodson R.J."/>
            <person name="Daugherty S.C."/>
            <person name="Madupu R."/>
            <person name="Angiuoli S.V."/>
            <person name="Durkin A.S."/>
            <person name="Haft D.H."/>
            <person name="Vamathevan J.J."/>
            <person name="Khouri H."/>
            <person name="Utterback T.R."/>
            <person name="Lee C."/>
            <person name="Dimitrov G."/>
            <person name="Jiang L."/>
            <person name="Qin H."/>
            <person name="Weidman J."/>
            <person name="Tran K."/>
            <person name="Kang K.H."/>
            <person name="Hance I.R."/>
            <person name="Nelson K.E."/>
            <person name="Fraser C.M."/>
        </authorList>
    </citation>
    <scope>NUCLEOTIDE SEQUENCE [LARGE SCALE GENOMIC DNA]</scope>
    <source>
        <strain>ATCC 35984 / DSM 28319 / BCRC 17069 / CCUG 31568 / BM 3577 / RP62A</strain>
    </source>
</reference>
<sequence>MFKKLFGKAKEVDKNIKIYAPLTGEYVKIEDIPDPVFAQKMMGEGFGINPTEGEVVSPIEGKVDNVFPTKHAVGLKAENGLELLVHIGLDTVQLDGKGFEVLVESGDDIKIGDPLIRFDLEYINNNAKSIISPIIITNSDQTESIHIEDVQAVVKGETQVIDVTVS</sequence>
<gene>
    <name type="primary">crr</name>
    <name type="ordered locus">SERP0998</name>
</gene>
<organism>
    <name type="scientific">Staphylococcus epidermidis (strain ATCC 35984 / DSM 28319 / BCRC 17069 / CCUG 31568 / BM 3577 / RP62A)</name>
    <dbReference type="NCBI Taxonomy" id="176279"/>
    <lineage>
        <taxon>Bacteria</taxon>
        <taxon>Bacillati</taxon>
        <taxon>Bacillota</taxon>
        <taxon>Bacilli</taxon>
        <taxon>Bacillales</taxon>
        <taxon>Staphylococcaceae</taxon>
        <taxon>Staphylococcus</taxon>
    </lineage>
</organism>
<name>PTGA_STAEQ</name>
<comment type="function">
    <text evidence="1">The phosphoenolpyruvate-dependent sugar phosphotransferase system (sugar PTS), a major carbohydrate active transport system, catalyzes the phosphorylation of incoming sugar substrates concomitantly with their translocation across the cell membrane. The enzyme II complex composed of PtsG and Crr is involved in glucose transport.</text>
</comment>
<comment type="cofactor">
    <cofactor evidence="1">
        <name>Zn(2+)</name>
        <dbReference type="ChEBI" id="CHEBI:29105"/>
    </cofactor>
    <text evidence="1">Binds 1 zinc ion per glycerol kinase EIIA-Glc dimer. The zinc ion is important for dimerization.</text>
</comment>
<comment type="subunit">
    <text evidence="1">Heterodimer with glycerol kinase (glpk).</text>
</comment>
<comment type="subcellular location">
    <subcellularLocation>
        <location evidence="3">Cytoplasm</location>
    </subcellularLocation>
</comment>
<comment type="domain">
    <text evidence="2">The EIIA domain is phosphorylated by phospho-HPr on a histidyl residue. Then, it transfers the phosphoryl group to the EIIB domain.</text>
</comment>
<protein>
    <recommendedName>
        <fullName evidence="1">PTS system glucose-specific EIIA component</fullName>
    </recommendedName>
    <alternativeName>
        <fullName evidence="1">EIIA-Glc</fullName>
    </alternativeName>
    <alternativeName>
        <fullName evidence="1">EIII-Glc</fullName>
    </alternativeName>
    <alternativeName>
        <fullName evidence="1">Glucose-specific phosphotransferase enzyme IIA component</fullName>
    </alternativeName>
</protein>